<reference evidence="10" key="1">
    <citation type="journal article" date="2014" name="BMC Biol.">
        <title>A comprehensive evaluation of rodent malaria parasite genomes and gene expression.</title>
        <authorList>
            <person name="Otto T.D."/>
            <person name="Bohme U."/>
            <person name="Jackson A.P."/>
            <person name="Hunt M."/>
            <person name="Franke-Fayard B."/>
            <person name="Hoeijmakers W.A."/>
            <person name="Religa A.A."/>
            <person name="Robertson L."/>
            <person name="Sanders M."/>
            <person name="Ogun S.A."/>
            <person name="Cunningham D."/>
            <person name="Erhart A."/>
            <person name="Billker O."/>
            <person name="Khan S.M."/>
            <person name="Stunnenberg H.G."/>
            <person name="Langhorne J."/>
            <person name="Holder A.A."/>
            <person name="Waters A.P."/>
            <person name="Newbold C.I."/>
            <person name="Pain A."/>
            <person name="Berriman M."/>
            <person name="Janse C.J."/>
        </authorList>
    </citation>
    <scope>NUCLEOTIDE SEQUENCE [LARGE SCALE GENOMIC DNA]</scope>
    <source>
        <strain evidence="10">ANKA</strain>
    </source>
</reference>
<reference evidence="8" key="2">
    <citation type="journal article" date="2010" name="PLoS Pathog.">
        <title>Exoerythrocytic Plasmodium parasites secrete a cysteine protease inhibitor involved in sporozoite invasion and capable of blocking cell death of host hepatocytes.</title>
        <authorList>
            <person name="Rennenberg A."/>
            <person name="Lehmann C."/>
            <person name="Heitmann A."/>
            <person name="Witt T."/>
            <person name="Hansen G."/>
            <person name="Nagarajan K."/>
            <person name="Deschermeier C."/>
            <person name="Turk V."/>
            <person name="Hilgenfeld R."/>
            <person name="Heussler V.T."/>
        </authorList>
    </citation>
    <scope>FUNCTION</scope>
    <scope>SUBCELLULAR LOCATION</scope>
    <scope>DEVELOPMENTAL STAGE</scope>
    <scope>DOMAIN</scope>
    <scope>PROTEOLYTIC CLEAVAGE</scope>
</reference>
<reference evidence="8" key="3">
    <citation type="journal article" date="2013" name="MBio">
        <title>Inhibitor of cysteine proteases is critical for motility and infectivity of Plasmodium sporozoites.</title>
        <authorList>
            <person name="Boysen K.E."/>
            <person name="Matuschewski K."/>
        </authorList>
    </citation>
    <scope>FUNCTION</scope>
    <scope>DISRUPTION PHENOTYPE</scope>
</reference>
<reference evidence="11" key="4">
    <citation type="journal article" date="2011" name="Structure">
        <title>Structural basis for the regulation of cysteine-protease activity by a new class of protease inhibitors in Plasmodium.</title>
        <authorList>
            <person name="Hansen G."/>
            <person name="Heitmann A."/>
            <person name="Witt T."/>
            <person name="Li H."/>
            <person name="Jiang H."/>
            <person name="Shen X."/>
            <person name="Heussler V.T."/>
            <person name="Rennenberg A."/>
            <person name="Hilgenfeld R."/>
        </authorList>
    </citation>
    <scope>X-RAY CRYSTALLOGRAPHY (2.60 ANGSTROMS) OF 195-275 AND 307-354 IN COMPLEX WITH P.FALCIPARUM FP2B</scope>
    <scope>FUNCTION</scope>
    <scope>DOMAIN</scope>
</reference>
<proteinExistence type="evidence at protein level"/>
<sequence>MKSITFFVFNICSILALLSHCEDNDIYSFDIVNETNWLKIAKNIFKGKSPSNFTIIPFNNTGSSNDNESNKEESVLLIRKKIKSNKNHDSSIISGDTVNGDISDLNYTASNFSDNSEDIEDNQKYPTTSYNSFNHLNSNIAFNEESEYIEINSESDLENKIKDINIKSNLEENNTMNESGKVDSKYELTGDEKCGKSLKLGNISNQTNQETITQSLSVGEILCIDLEGNAGTGYLWVLLGIHKDEPIINPENFPTKLTKKSFFSEEISVTQPKKYKIDEHDSSKNVNREIESPEQKESDSKPKKPQMQLLGGPDRMRSVIKGHKPGKYYIVYSYYRPFSPTSGANTKIIYVTVQ</sequence>
<feature type="signal peptide" evidence="2">
    <location>
        <begin position="1"/>
        <end position="21"/>
    </location>
</feature>
<feature type="chain" id="PRO_5021321678" description="Falstatin" evidence="2">
    <location>
        <begin position="22"/>
        <end position="354"/>
    </location>
</feature>
<feature type="region of interest" description="Disordered" evidence="3">
    <location>
        <begin position="274"/>
        <end position="317"/>
    </location>
</feature>
<feature type="short sequence motif" description="BC loop; binds and inhibits the active site cavity of cysteine proteases" evidence="1">
    <location>
        <begin position="226"/>
        <end position="236"/>
    </location>
</feature>
<feature type="compositionally biased region" description="Basic and acidic residues" evidence="3">
    <location>
        <begin position="275"/>
        <end position="302"/>
    </location>
</feature>
<comment type="function">
    <text evidence="1 4 5 6">Cysteine protease inhibitor (PubMed:20361051, PubMed:21742259). Required for the invasion of host erythrocytes by merozoites (By similarity). In the mosquito vector, essential for the gliding motility of hemocoel sporozoites and, therefore, for salivary gland invasion and the subsequent transmission from the mosquito to the mammalian host (PubMed:24281719). Required for the invasion of host hepatocytes (PubMed:20361051). During the liver stage, may prevent host hepatocyte cell death likely by inhibiting host cysteine proteases (PubMed:20361051).</text>
</comment>
<comment type="subunit">
    <text evidence="1">Oligomer; probably composed of 10 monomers.</text>
</comment>
<comment type="subcellular location">
    <subcellularLocation>
        <location evidence="4">Secreted</location>
    </subcellularLocation>
    <subcellularLocation>
        <location evidence="4">Cytoplasmic vesicle</location>
        <location evidence="4">Secretory vesicle</location>
        <location evidence="4">Microneme</location>
    </subcellularLocation>
    <subcellularLocation>
        <location evidence="4">Cytoplasmic vesicle</location>
        <location evidence="4">Secretory vesicle</location>
    </subcellularLocation>
    <subcellularLocation>
        <location evidence="4">Host cytoplasm</location>
    </subcellularLocation>
    <subcellularLocation>
        <location evidence="4">Parasitophorous vacuole lumen</location>
    </subcellularLocation>
    <text evidence="1 4">During the asexual blood stage, localizes to the parasitophorous vacuole (PV) and to exomembrane structures beyond the limits of the PV (By similarity). Localizes to punctate peripheral structures in schizonts and rings (By similarity). Released after host erythrocyte rupture (By similarity). Secreted by gliding sporozoites (PubMed:20361051). Localizes partially with micronemes at the apical pole of sporozoites (PubMed:20361051). Released into the host cytoplasm by sporozoites (PubMed:20361051). During the host liver stage and in late schizont and cytomere stages, localizes mainly to the PV, but is also present in the parasite cytoplasm (PubMed:20361051). After completion of daughter parasite development, localizes to the host hepatocyte cytoplasm following the rupture of the PV membrane (PubMed:20361051).</text>
</comment>
<comment type="developmental stage">
    <text evidence="4">Expressed during the asexual blood stage including in trophozoites and schizonts (at protein level) (PubMed:20361051). Expressed in sporozoites (at protein level) (PubMed:20361051).</text>
</comment>
<comment type="domain">
    <text evidence="4 5">The C-terminal domain is sufficient for cysteine protease inhibition.</text>
</comment>
<comment type="PTM">
    <text evidence="4">During the liver stage, proteolytically cleaved.</text>
</comment>
<comment type="disruption phenotype">
    <text evidence="6">No effect on parasite virulence or blood asexual growth (PubMed:24281719). In the mosquito vector, ookinete formation and subsequent transformation and growth during sporogony are normal (PubMed:24281719). However, hemocoel sporozoites have impaired gliding motility resulting in the failure to invade salivary glands (PubMed:24281719). In the mouse host, hemocoel sporozoites fail to infect hepatocytes (PubMed:24281719).</text>
</comment>
<comment type="similarity">
    <text evidence="8">Belongs to the protease inhibitor I71 family.</text>
</comment>
<dbReference type="EMBL" id="LK023123">
    <property type="protein sequence ID" value="VUC55288.1"/>
    <property type="molecule type" value="Genomic_DNA"/>
</dbReference>
<dbReference type="PDB" id="3PNR">
    <property type="method" value="X-ray"/>
    <property type="resolution" value="2.60 A"/>
    <property type="chains" value="B=195-275, A=307-354"/>
</dbReference>
<dbReference type="PDBsum" id="3PNR"/>
<dbReference type="SMR" id="A0A509AJA5"/>
<dbReference type="FunCoup" id="A0A509AJA5">
    <property type="interactions" value="2"/>
</dbReference>
<dbReference type="STRING" id="5823.A0A509AJA5"/>
<dbReference type="VEuPathDB" id="PlasmoDB:PBANKA_0813000"/>
<dbReference type="InParanoid" id="A0A509AJA5"/>
<dbReference type="OMA" id="FFVFNIC"/>
<dbReference type="Proteomes" id="UP000074855">
    <property type="component" value="Chromosome 8"/>
</dbReference>
<dbReference type="GO" id="GO:0005576">
    <property type="term" value="C:extracellular region"/>
    <property type="evidence" value="ECO:0007669"/>
    <property type="project" value="UniProtKB-SubCell"/>
</dbReference>
<dbReference type="GO" id="GO:0030430">
    <property type="term" value="C:host cell cytoplasm"/>
    <property type="evidence" value="ECO:0007669"/>
    <property type="project" value="UniProtKB-SubCell"/>
</dbReference>
<dbReference type="GO" id="GO:0020009">
    <property type="term" value="C:microneme"/>
    <property type="evidence" value="ECO:0007669"/>
    <property type="project" value="UniProtKB-SubCell"/>
</dbReference>
<dbReference type="GO" id="GO:0030133">
    <property type="term" value="C:transport vesicle"/>
    <property type="evidence" value="ECO:0007669"/>
    <property type="project" value="UniProtKB-SubCell"/>
</dbReference>
<dbReference type="GO" id="GO:0004869">
    <property type="term" value="F:cysteine-type endopeptidase inhibitor activity"/>
    <property type="evidence" value="ECO:0007669"/>
    <property type="project" value="UniProtKB-KW"/>
</dbReference>
<dbReference type="Gene3D" id="2.60.40.2020">
    <property type="match status" value="2"/>
</dbReference>
<dbReference type="InterPro" id="IPR036331">
    <property type="entry name" value="Chagasin-like_sf"/>
</dbReference>
<dbReference type="InterPro" id="IPR024321">
    <property type="entry name" value="Prot_Inh_falstatin"/>
</dbReference>
<dbReference type="Pfam" id="PF12628">
    <property type="entry name" value="Inhibitor_I71"/>
    <property type="match status" value="1"/>
</dbReference>
<dbReference type="SUPFAM" id="SSF141066">
    <property type="entry name" value="ICP-like"/>
    <property type="match status" value="1"/>
</dbReference>
<evidence type="ECO:0000250" key="1">
    <source>
        <dbReference type="UniProtKB" id="Q8I333"/>
    </source>
</evidence>
<evidence type="ECO:0000255" key="2"/>
<evidence type="ECO:0000256" key="3">
    <source>
        <dbReference type="SAM" id="MobiDB-lite"/>
    </source>
</evidence>
<evidence type="ECO:0000269" key="4">
    <source>
    </source>
</evidence>
<evidence type="ECO:0000269" key="5">
    <source>
    </source>
</evidence>
<evidence type="ECO:0000269" key="6">
    <source>
    </source>
</evidence>
<evidence type="ECO:0000303" key="7">
    <source>
    </source>
</evidence>
<evidence type="ECO:0000305" key="8"/>
<evidence type="ECO:0000312" key="9">
    <source>
        <dbReference type="EMBL" id="VUC55288.1"/>
    </source>
</evidence>
<evidence type="ECO:0000312" key="10">
    <source>
        <dbReference type="Proteomes" id="UP000074855"/>
    </source>
</evidence>
<evidence type="ECO:0007829" key="11">
    <source>
        <dbReference type="PDB" id="3PNR"/>
    </source>
</evidence>
<accession>A0A509AJA5</accession>
<organism evidence="10">
    <name type="scientific">Plasmodium berghei (strain Anka)</name>
    <dbReference type="NCBI Taxonomy" id="5823"/>
    <lineage>
        <taxon>Eukaryota</taxon>
        <taxon>Sar</taxon>
        <taxon>Alveolata</taxon>
        <taxon>Apicomplexa</taxon>
        <taxon>Aconoidasida</taxon>
        <taxon>Haemosporida</taxon>
        <taxon>Plasmodiidae</taxon>
        <taxon>Plasmodium</taxon>
        <taxon>Plasmodium (Vinckeia)</taxon>
    </lineage>
</organism>
<protein>
    <recommendedName>
        <fullName evidence="1">Falstatin</fullName>
    </recommendedName>
    <alternativeName>
        <fullName evidence="7">Cysteine protease inhibitor</fullName>
        <shortName evidence="7">PbICP</shortName>
    </alternativeName>
</protein>
<keyword id="KW-0002">3D-structure</keyword>
<keyword id="KW-0968">Cytoplasmic vesicle</keyword>
<keyword id="KW-1035">Host cytoplasm</keyword>
<keyword id="KW-0646">Protease inhibitor</keyword>
<keyword id="KW-1185">Reference proteome</keyword>
<keyword id="KW-0964">Secreted</keyword>
<keyword id="KW-0732">Signal</keyword>
<keyword id="KW-0789">Thiol protease inhibitor</keyword>
<name>ICP_PLABA</name>
<gene>
    <name evidence="7" type="primary">ICP</name>
    <name evidence="9" type="ORF">PBANKA_0813000</name>
</gene>